<organism>
    <name type="scientific">Pseudomonas aeruginosa (strain ATCC 15692 / DSM 22644 / CIP 104116 / JCM 14847 / LMG 12228 / 1C / PRS 101 / PAO1)</name>
    <dbReference type="NCBI Taxonomy" id="208964"/>
    <lineage>
        <taxon>Bacteria</taxon>
        <taxon>Pseudomonadati</taxon>
        <taxon>Pseudomonadota</taxon>
        <taxon>Gammaproteobacteria</taxon>
        <taxon>Pseudomonadales</taxon>
        <taxon>Pseudomonadaceae</taxon>
        <taxon>Pseudomonas</taxon>
    </lineage>
</organism>
<comment type="function">
    <text evidence="1">Transferase that catalyzes the transfer of sulfur from thiosulfate to thiophilic acceptors such as cyanide or dithiols. May function in a CysM-independent thiosulfate assimilation pathway by catalyzing the conversion of thiosulfate to sulfite, which can then be used for L-cysteine biosynthesis.</text>
</comment>
<comment type="catalytic activity">
    <reaction evidence="1">
        <text>thiosulfate + hydrogen cyanide = thiocyanate + sulfite + 2 H(+)</text>
        <dbReference type="Rhea" id="RHEA:16881"/>
        <dbReference type="ChEBI" id="CHEBI:15378"/>
        <dbReference type="ChEBI" id="CHEBI:17359"/>
        <dbReference type="ChEBI" id="CHEBI:18022"/>
        <dbReference type="ChEBI" id="CHEBI:18407"/>
        <dbReference type="ChEBI" id="CHEBI:33542"/>
        <dbReference type="EC" id="2.8.1.1"/>
    </reaction>
</comment>
<comment type="catalytic activity">
    <reaction evidence="1">
        <text>thiosulfate + [thioredoxin]-dithiol = [thioredoxin]-disulfide + hydrogen sulfide + sulfite + 2 H(+)</text>
        <dbReference type="Rhea" id="RHEA:83859"/>
        <dbReference type="Rhea" id="RHEA-COMP:10698"/>
        <dbReference type="Rhea" id="RHEA-COMP:10700"/>
        <dbReference type="ChEBI" id="CHEBI:15378"/>
        <dbReference type="ChEBI" id="CHEBI:17359"/>
        <dbReference type="ChEBI" id="CHEBI:29919"/>
        <dbReference type="ChEBI" id="CHEBI:29950"/>
        <dbReference type="ChEBI" id="CHEBI:33542"/>
        <dbReference type="ChEBI" id="CHEBI:50058"/>
    </reaction>
</comment>
<comment type="subcellular location">
    <subcellularLocation>
        <location evidence="1">Cytoplasm</location>
    </subcellularLocation>
</comment>
<comment type="similarity">
    <text evidence="1">Belongs to the GlpE family.</text>
</comment>
<keyword id="KW-0963">Cytoplasm</keyword>
<keyword id="KW-1185">Reference proteome</keyword>
<keyword id="KW-0808">Transferase</keyword>
<reference key="1">
    <citation type="journal article" date="2000" name="Nature">
        <title>Complete genome sequence of Pseudomonas aeruginosa PAO1, an opportunistic pathogen.</title>
        <authorList>
            <person name="Stover C.K."/>
            <person name="Pham X.-Q.T."/>
            <person name="Erwin A.L."/>
            <person name="Mizoguchi S.D."/>
            <person name="Warrener P."/>
            <person name="Hickey M.J."/>
            <person name="Brinkman F.S.L."/>
            <person name="Hufnagle W.O."/>
            <person name="Kowalik D.J."/>
            <person name="Lagrou M."/>
            <person name="Garber R.L."/>
            <person name="Goltry L."/>
            <person name="Tolentino E."/>
            <person name="Westbrock-Wadman S."/>
            <person name="Yuan Y."/>
            <person name="Brody L.L."/>
            <person name="Coulter S.N."/>
            <person name="Folger K.R."/>
            <person name="Kas A."/>
            <person name="Larbig K."/>
            <person name="Lim R.M."/>
            <person name="Smith K.A."/>
            <person name="Spencer D.H."/>
            <person name="Wong G.K.-S."/>
            <person name="Wu Z."/>
            <person name="Paulsen I.T."/>
            <person name="Reizer J."/>
            <person name="Saier M.H. Jr."/>
            <person name="Hancock R.E.W."/>
            <person name="Lory S."/>
            <person name="Olson M.V."/>
        </authorList>
    </citation>
    <scope>NUCLEOTIDE SEQUENCE [LARGE SCALE GENOMIC DNA]</scope>
    <source>
        <strain>ATCC 15692 / DSM 22644 / CIP 104116 / JCM 14847 / LMG 12228 / 1C / PRS 101 / PAO1</strain>
    </source>
</reference>
<sequence>MSDTFQRIAPEQVRQLRENGAQVVDIRDPQSFAVGHISGSRHIDNHSVADFIAAADLDAPLVVVCYHGNSSQSAAAYFIQQGFSDVYSLDGGFELWRSVYPADTSSGEAE</sequence>
<proteinExistence type="inferred from homology"/>
<accession>Q9I5U8</accession>
<dbReference type="EC" id="2.8.1.1" evidence="1"/>
<dbReference type="EMBL" id="AE004091">
    <property type="protein sequence ID" value="AAG03978.1"/>
    <property type="molecule type" value="Genomic_DNA"/>
</dbReference>
<dbReference type="PIR" id="E83571">
    <property type="entry name" value="E83571"/>
</dbReference>
<dbReference type="RefSeq" id="NP_249280.1">
    <property type="nucleotide sequence ID" value="NC_002516.2"/>
</dbReference>
<dbReference type="RefSeq" id="WP_003085081.1">
    <property type="nucleotide sequence ID" value="NZ_QZGE01000010.1"/>
</dbReference>
<dbReference type="SMR" id="Q9I5U8"/>
<dbReference type="FunCoup" id="Q9I5U8">
    <property type="interactions" value="190"/>
</dbReference>
<dbReference type="STRING" id="208964.PA0589"/>
<dbReference type="PaxDb" id="208964-PA0589"/>
<dbReference type="DNASU" id="880468"/>
<dbReference type="GeneID" id="880468"/>
<dbReference type="KEGG" id="pae:PA0589"/>
<dbReference type="PATRIC" id="fig|208964.12.peg.625"/>
<dbReference type="PseudoCAP" id="PA0589"/>
<dbReference type="HOGENOM" id="CLU_089574_14_0_6"/>
<dbReference type="InParanoid" id="Q9I5U8"/>
<dbReference type="OrthoDB" id="9811849at2"/>
<dbReference type="PhylomeDB" id="Q9I5U8"/>
<dbReference type="BioCyc" id="PAER208964:G1FZ6-596-MONOMER"/>
<dbReference type="Proteomes" id="UP000002438">
    <property type="component" value="Chromosome"/>
</dbReference>
<dbReference type="GO" id="GO:0005737">
    <property type="term" value="C:cytoplasm"/>
    <property type="evidence" value="ECO:0007669"/>
    <property type="project" value="UniProtKB-SubCell"/>
</dbReference>
<dbReference type="GO" id="GO:0004792">
    <property type="term" value="F:thiosulfate-cyanide sulfurtransferase activity"/>
    <property type="evidence" value="ECO:0007669"/>
    <property type="project" value="UniProtKB-UniRule"/>
</dbReference>
<dbReference type="GO" id="GO:0006071">
    <property type="term" value="P:glycerol metabolic process"/>
    <property type="evidence" value="ECO:0007669"/>
    <property type="project" value="UniProtKB-UniRule"/>
</dbReference>
<dbReference type="CDD" id="cd01444">
    <property type="entry name" value="GlpE_ST"/>
    <property type="match status" value="1"/>
</dbReference>
<dbReference type="Gene3D" id="3.40.250.10">
    <property type="entry name" value="Rhodanese-like domain"/>
    <property type="match status" value="1"/>
</dbReference>
<dbReference type="HAMAP" id="MF_01009">
    <property type="entry name" value="Thiosulf_sulfurtr"/>
    <property type="match status" value="1"/>
</dbReference>
<dbReference type="InterPro" id="IPR050229">
    <property type="entry name" value="GlpE_sulfurtransferase"/>
</dbReference>
<dbReference type="InterPro" id="IPR001763">
    <property type="entry name" value="Rhodanese-like_dom"/>
</dbReference>
<dbReference type="InterPro" id="IPR036873">
    <property type="entry name" value="Rhodanese-like_dom_sf"/>
</dbReference>
<dbReference type="InterPro" id="IPR023695">
    <property type="entry name" value="Thiosulf_sulfurTrfase"/>
</dbReference>
<dbReference type="NCBIfam" id="NF001195">
    <property type="entry name" value="PRK00162.1"/>
    <property type="match status" value="1"/>
</dbReference>
<dbReference type="PANTHER" id="PTHR43031">
    <property type="entry name" value="FAD-DEPENDENT OXIDOREDUCTASE"/>
    <property type="match status" value="1"/>
</dbReference>
<dbReference type="PANTHER" id="PTHR43031:SF6">
    <property type="entry name" value="THIOSULFATE SULFURTRANSFERASE GLPE"/>
    <property type="match status" value="1"/>
</dbReference>
<dbReference type="Pfam" id="PF00581">
    <property type="entry name" value="Rhodanese"/>
    <property type="match status" value="1"/>
</dbReference>
<dbReference type="SMART" id="SM00450">
    <property type="entry name" value="RHOD"/>
    <property type="match status" value="1"/>
</dbReference>
<dbReference type="SUPFAM" id="SSF52821">
    <property type="entry name" value="Rhodanese/Cell cycle control phosphatase"/>
    <property type="match status" value="1"/>
</dbReference>
<dbReference type="PROSITE" id="PS50206">
    <property type="entry name" value="RHODANESE_3"/>
    <property type="match status" value="1"/>
</dbReference>
<protein>
    <recommendedName>
        <fullName evidence="1">Thiosulfate sulfurtransferase GlpE</fullName>
        <ecNumber evidence="1">2.8.1.1</ecNumber>
    </recommendedName>
</protein>
<gene>
    <name evidence="1" type="primary">glpE</name>
    <name type="ordered locus">PA0589</name>
</gene>
<name>GLPE_PSEAE</name>
<feature type="chain" id="PRO_0000200559" description="Thiosulfate sulfurtransferase GlpE">
    <location>
        <begin position="1"/>
        <end position="110"/>
    </location>
</feature>
<feature type="domain" description="Rhodanese" evidence="1">
    <location>
        <begin position="17"/>
        <end position="105"/>
    </location>
</feature>
<feature type="active site" description="Cysteine persulfide intermediate" evidence="1">
    <location>
        <position position="65"/>
    </location>
</feature>
<evidence type="ECO:0000255" key="1">
    <source>
        <dbReference type="HAMAP-Rule" id="MF_01009"/>
    </source>
</evidence>